<proteinExistence type="inferred from homology"/>
<reference key="1">
    <citation type="journal article" date="2003" name="Proc. Natl. Acad. Sci. U.S.A.">
        <title>Genome sequence of the cyanobacterium Prochlorococcus marinus SS120, a nearly minimal oxyphototrophic genome.</title>
        <authorList>
            <person name="Dufresne A."/>
            <person name="Salanoubat M."/>
            <person name="Partensky F."/>
            <person name="Artiguenave F."/>
            <person name="Axmann I.M."/>
            <person name="Barbe V."/>
            <person name="Duprat S."/>
            <person name="Galperin M.Y."/>
            <person name="Koonin E.V."/>
            <person name="Le Gall F."/>
            <person name="Makarova K.S."/>
            <person name="Ostrowski M."/>
            <person name="Oztas S."/>
            <person name="Robert C."/>
            <person name="Rogozin I.B."/>
            <person name="Scanlan D.J."/>
            <person name="Tandeau de Marsac N."/>
            <person name="Weissenbach J."/>
            <person name="Wincker P."/>
            <person name="Wolf Y.I."/>
            <person name="Hess W.R."/>
        </authorList>
    </citation>
    <scope>NUCLEOTIDE SEQUENCE [LARGE SCALE GENOMIC DNA]</scope>
    <source>
        <strain>SARG / CCMP1375 / SS120</strain>
    </source>
</reference>
<feature type="chain" id="PRO_0000134562" description="Orotidine 5'-phosphate decarboxylase">
    <location>
        <begin position="1"/>
        <end position="240"/>
    </location>
</feature>
<feature type="active site" description="Proton donor" evidence="1">
    <location>
        <position position="66"/>
    </location>
</feature>
<feature type="binding site" evidence="1">
    <location>
        <position position="16"/>
    </location>
    <ligand>
        <name>substrate</name>
    </ligand>
</feature>
<feature type="binding site" evidence="1">
    <location>
        <position position="37"/>
    </location>
    <ligand>
        <name>substrate</name>
    </ligand>
</feature>
<feature type="binding site" evidence="1">
    <location>
        <begin position="64"/>
        <end position="73"/>
    </location>
    <ligand>
        <name>substrate</name>
    </ligand>
</feature>
<feature type="binding site" evidence="1">
    <location>
        <position position="128"/>
    </location>
    <ligand>
        <name>substrate</name>
    </ligand>
</feature>
<feature type="binding site" evidence="1">
    <location>
        <position position="190"/>
    </location>
    <ligand>
        <name>substrate</name>
    </ligand>
</feature>
<feature type="binding site" evidence="1">
    <location>
        <position position="199"/>
    </location>
    <ligand>
        <name>substrate</name>
    </ligand>
</feature>
<feature type="binding site" evidence="1">
    <location>
        <position position="219"/>
    </location>
    <ligand>
        <name>substrate</name>
    </ligand>
</feature>
<feature type="binding site" evidence="1">
    <location>
        <position position="220"/>
    </location>
    <ligand>
        <name>substrate</name>
    </ligand>
</feature>
<gene>
    <name evidence="1" type="primary">pyrF</name>
    <name type="ordered locus">Pro_1409</name>
</gene>
<evidence type="ECO:0000255" key="1">
    <source>
        <dbReference type="HAMAP-Rule" id="MF_01200"/>
    </source>
</evidence>
<comment type="function">
    <text evidence="1">Catalyzes the decarboxylation of orotidine 5'-monophosphate (OMP) to uridine 5'-monophosphate (UMP).</text>
</comment>
<comment type="catalytic activity">
    <reaction evidence="1">
        <text>orotidine 5'-phosphate + H(+) = UMP + CO2</text>
        <dbReference type="Rhea" id="RHEA:11596"/>
        <dbReference type="ChEBI" id="CHEBI:15378"/>
        <dbReference type="ChEBI" id="CHEBI:16526"/>
        <dbReference type="ChEBI" id="CHEBI:57538"/>
        <dbReference type="ChEBI" id="CHEBI:57865"/>
        <dbReference type="EC" id="4.1.1.23"/>
    </reaction>
</comment>
<comment type="pathway">
    <text evidence="1">Pyrimidine metabolism; UMP biosynthesis via de novo pathway; UMP from orotate: step 2/2.</text>
</comment>
<comment type="subunit">
    <text evidence="1">Homodimer.</text>
</comment>
<comment type="similarity">
    <text evidence="1">Belongs to the OMP decarboxylase family. Type 1 subfamily.</text>
</comment>
<accession>Q7VAP8</accession>
<keyword id="KW-0210">Decarboxylase</keyword>
<keyword id="KW-0456">Lyase</keyword>
<keyword id="KW-0665">Pyrimidine biosynthesis</keyword>
<keyword id="KW-1185">Reference proteome</keyword>
<dbReference type="EC" id="4.1.1.23" evidence="1"/>
<dbReference type="EMBL" id="AE017126">
    <property type="protein sequence ID" value="AAQ00453.1"/>
    <property type="molecule type" value="Genomic_DNA"/>
</dbReference>
<dbReference type="RefSeq" id="NP_875800.1">
    <property type="nucleotide sequence ID" value="NC_005042.1"/>
</dbReference>
<dbReference type="RefSeq" id="WP_011125560.1">
    <property type="nucleotide sequence ID" value="NC_005042.1"/>
</dbReference>
<dbReference type="SMR" id="Q7VAP8"/>
<dbReference type="STRING" id="167539.Pro_1409"/>
<dbReference type="EnsemblBacteria" id="AAQ00453">
    <property type="protein sequence ID" value="AAQ00453"/>
    <property type="gene ID" value="Pro_1409"/>
</dbReference>
<dbReference type="KEGG" id="pma:Pro_1409"/>
<dbReference type="PATRIC" id="fig|167539.5.peg.1475"/>
<dbReference type="eggNOG" id="COG0284">
    <property type="taxonomic scope" value="Bacteria"/>
</dbReference>
<dbReference type="HOGENOM" id="CLU_067069_1_0_3"/>
<dbReference type="OrthoDB" id="9806203at2"/>
<dbReference type="UniPathway" id="UPA00070">
    <property type="reaction ID" value="UER00120"/>
</dbReference>
<dbReference type="Proteomes" id="UP000001420">
    <property type="component" value="Chromosome"/>
</dbReference>
<dbReference type="GO" id="GO:0005829">
    <property type="term" value="C:cytosol"/>
    <property type="evidence" value="ECO:0007669"/>
    <property type="project" value="TreeGrafter"/>
</dbReference>
<dbReference type="GO" id="GO:0004590">
    <property type="term" value="F:orotidine-5'-phosphate decarboxylase activity"/>
    <property type="evidence" value="ECO:0007669"/>
    <property type="project" value="UniProtKB-UniRule"/>
</dbReference>
<dbReference type="GO" id="GO:0006207">
    <property type="term" value="P:'de novo' pyrimidine nucleobase biosynthetic process"/>
    <property type="evidence" value="ECO:0007669"/>
    <property type="project" value="InterPro"/>
</dbReference>
<dbReference type="GO" id="GO:0044205">
    <property type="term" value="P:'de novo' UMP biosynthetic process"/>
    <property type="evidence" value="ECO:0007669"/>
    <property type="project" value="UniProtKB-UniRule"/>
</dbReference>
<dbReference type="CDD" id="cd04725">
    <property type="entry name" value="OMP_decarboxylase_like"/>
    <property type="match status" value="1"/>
</dbReference>
<dbReference type="Gene3D" id="3.20.20.70">
    <property type="entry name" value="Aldolase class I"/>
    <property type="match status" value="1"/>
</dbReference>
<dbReference type="HAMAP" id="MF_01200_B">
    <property type="entry name" value="OMPdecase_type1_B"/>
    <property type="match status" value="1"/>
</dbReference>
<dbReference type="InterPro" id="IPR013785">
    <property type="entry name" value="Aldolase_TIM"/>
</dbReference>
<dbReference type="InterPro" id="IPR014732">
    <property type="entry name" value="OMPdecase"/>
</dbReference>
<dbReference type="InterPro" id="IPR018089">
    <property type="entry name" value="OMPdecase_AS"/>
</dbReference>
<dbReference type="InterPro" id="IPR047596">
    <property type="entry name" value="OMPdecase_bac"/>
</dbReference>
<dbReference type="InterPro" id="IPR001754">
    <property type="entry name" value="OMPdeCOase_dom"/>
</dbReference>
<dbReference type="InterPro" id="IPR011060">
    <property type="entry name" value="RibuloseP-bd_barrel"/>
</dbReference>
<dbReference type="NCBIfam" id="NF001273">
    <property type="entry name" value="PRK00230.1"/>
    <property type="match status" value="1"/>
</dbReference>
<dbReference type="NCBIfam" id="TIGR01740">
    <property type="entry name" value="pyrF"/>
    <property type="match status" value="1"/>
</dbReference>
<dbReference type="PANTHER" id="PTHR32119">
    <property type="entry name" value="OROTIDINE 5'-PHOSPHATE DECARBOXYLASE"/>
    <property type="match status" value="1"/>
</dbReference>
<dbReference type="PANTHER" id="PTHR32119:SF2">
    <property type="entry name" value="OROTIDINE 5'-PHOSPHATE DECARBOXYLASE"/>
    <property type="match status" value="1"/>
</dbReference>
<dbReference type="Pfam" id="PF00215">
    <property type="entry name" value="OMPdecase"/>
    <property type="match status" value="1"/>
</dbReference>
<dbReference type="SMART" id="SM00934">
    <property type="entry name" value="OMPdecase"/>
    <property type="match status" value="1"/>
</dbReference>
<dbReference type="SUPFAM" id="SSF51366">
    <property type="entry name" value="Ribulose-phoshate binding barrel"/>
    <property type="match status" value="1"/>
</dbReference>
<dbReference type="PROSITE" id="PS00156">
    <property type="entry name" value="OMPDECASE"/>
    <property type="match status" value="1"/>
</dbReference>
<organism>
    <name type="scientific">Prochlorococcus marinus (strain SARG / CCMP1375 / SS120)</name>
    <dbReference type="NCBI Taxonomy" id="167539"/>
    <lineage>
        <taxon>Bacteria</taxon>
        <taxon>Bacillati</taxon>
        <taxon>Cyanobacteriota</taxon>
        <taxon>Cyanophyceae</taxon>
        <taxon>Synechococcales</taxon>
        <taxon>Prochlorococcaceae</taxon>
        <taxon>Prochlorococcus</taxon>
    </lineage>
</organism>
<sequence length="240" mass="26020">MTLSFKPEDKLILALDGMSGAEVFMLIEKLPNLIWVKVGLELFTLLGPQIINQLRDRGKKVFLDLKFHDIPTTMGRACYQAAKTGAELITVHACAGKKGIEEANKSAVKGAKEVGLPPPSLLAVTVLTSWGSKDFVQELGIQQSLDQRVSLLANLASSAGIQGCICSPLEVMKLRKDFPEPFQLITPGIRSCGENINDQNRIMTPLEAIDAGSSKLVIGREVTSSENPSDAFNRICSQLI</sequence>
<protein>
    <recommendedName>
        <fullName evidence="1">Orotidine 5'-phosphate decarboxylase</fullName>
        <ecNumber evidence="1">4.1.1.23</ecNumber>
    </recommendedName>
    <alternativeName>
        <fullName evidence="1">OMP decarboxylase</fullName>
        <shortName evidence="1">OMPDCase</shortName>
        <shortName evidence="1">OMPdecase</shortName>
    </alternativeName>
</protein>
<name>PYRF_PROMA</name>